<protein>
    <recommendedName>
        <fullName evidence="7">Subtilisin-like protease SBT3.4</fullName>
        <ecNumber evidence="6">3.4.21.-</ecNumber>
    </recommendedName>
    <alternativeName>
        <fullName evidence="7">Subtilase subfamily 3 member 4</fullName>
        <shortName evidence="7">AtSBT3.4</shortName>
    </alternativeName>
</protein>
<sequence>MRNFRSSVLVVLSLIIVLNVARASAKSKVHIVYLGEKQHDDPKFVTESHHQMLSSLLGSKDDAHESMVYSYRHGFSGFAAKLTKSQAKKIADSPEVIHVIPDSYYELATTRIWDYLGPSADNSKNLVSDTNMGDQTIIGVIDTGVWPESESFNDYGVGPVPSHWKGGCEPGENFISTNCNRKLIGAKYFINGFLAENQFNATESPDYISARDFDGHGTHVASIAGGSFVPNVSYKGLGRGTLRGGAPRARIAMYKACWYINELDGVTCSFSDIMKAIDEAIHDGVDVLSISLGGRVPLNSETDLRDGIATGAFHAVAKGIVVVCAGGNAGPSSQTVVNTAPWILTVAATTLDRSFATPIILGNNQVILGQAMYIGPELGFTSLVYPEDPGNSIDTFSGVCESLNLNSNRTMAGKVVLCFTTARDFTVVSTAASIVKAAGGLGLIIARNPGYNLAPCSDDFPCVAIDNELGTDILFYIRYTGSPVVKIQPSRTLVGEPVGTKVATFSSRGPNSISPAILKPDIAAPGVSILAATSPNDTLNAGGFVMRSGTSMAAPVISGVIALLKSLHPDWSPAAFRSAIVTTAWRTDPFGEQIAAESSSLKVPDPFDYGGGLVNPEKAAEPGLILDMDSQDYVLYLCSAGYNDSSISRLVGKVTVCSNPKPSVLDINLPSITIPNLKDEVTLTRTVTNVGPVDSVYKVLVEPPLGIQVVVTPETLVFNSKTKSVSFTVIVSTTHKINTGFYFGSLTWTDSIHNVVIPVSVRTQILQNYYDEN</sequence>
<dbReference type="EC" id="3.4.21.-" evidence="6"/>
<dbReference type="EMBL" id="AC006424">
    <property type="protein sequence ID" value="AAF31277.1"/>
    <property type="status" value="ALT_SEQ"/>
    <property type="molecule type" value="Genomic_DNA"/>
</dbReference>
<dbReference type="EMBL" id="CP002684">
    <property type="protein sequence ID" value="AEE31543.1"/>
    <property type="molecule type" value="Genomic_DNA"/>
</dbReference>
<dbReference type="PIR" id="B86454">
    <property type="entry name" value="B86454"/>
</dbReference>
<dbReference type="RefSeq" id="NP_564413.2">
    <property type="nucleotide sequence ID" value="NM_103028.3"/>
</dbReference>
<dbReference type="SMR" id="F4HPF1"/>
<dbReference type="FunCoup" id="F4HPF1">
    <property type="interactions" value="14"/>
</dbReference>
<dbReference type="STRING" id="3702.F4HPF1"/>
<dbReference type="MEROPS" id="S08.A27"/>
<dbReference type="GlyCosmos" id="F4HPF1">
    <property type="glycosylation" value="5 sites, No reported glycans"/>
</dbReference>
<dbReference type="GlyGen" id="F4HPF1">
    <property type="glycosylation" value="5 sites"/>
</dbReference>
<dbReference type="PaxDb" id="3702-AT1G32950.1"/>
<dbReference type="EnsemblPlants" id="AT1G32950.1">
    <property type="protein sequence ID" value="AT1G32950.1"/>
    <property type="gene ID" value="AT1G32950"/>
</dbReference>
<dbReference type="GeneID" id="840189"/>
<dbReference type="Gramene" id="AT1G32950.1">
    <property type="protein sequence ID" value="AT1G32950.1"/>
    <property type="gene ID" value="AT1G32950"/>
</dbReference>
<dbReference type="KEGG" id="ath:AT1G32950"/>
<dbReference type="Araport" id="AT1G32950"/>
<dbReference type="TAIR" id="AT1G32950"/>
<dbReference type="eggNOG" id="ENOG502QSF0">
    <property type="taxonomic scope" value="Eukaryota"/>
</dbReference>
<dbReference type="HOGENOM" id="CLU_000625_4_2_1"/>
<dbReference type="InParanoid" id="F4HPF1"/>
<dbReference type="OrthoDB" id="206201at2759"/>
<dbReference type="PRO" id="PR:F4HPF1"/>
<dbReference type="Proteomes" id="UP000006548">
    <property type="component" value="Chromosome 1"/>
</dbReference>
<dbReference type="ExpressionAtlas" id="F4HPF1">
    <property type="expression patterns" value="baseline and differential"/>
</dbReference>
<dbReference type="GO" id="GO:0005576">
    <property type="term" value="C:extracellular region"/>
    <property type="evidence" value="ECO:0007669"/>
    <property type="project" value="UniProtKB-SubCell"/>
</dbReference>
<dbReference type="GO" id="GO:0004252">
    <property type="term" value="F:serine-type endopeptidase activity"/>
    <property type="evidence" value="ECO:0007669"/>
    <property type="project" value="InterPro"/>
</dbReference>
<dbReference type="GO" id="GO:0006508">
    <property type="term" value="P:proteolysis"/>
    <property type="evidence" value="ECO:0007669"/>
    <property type="project" value="UniProtKB-KW"/>
</dbReference>
<dbReference type="CDD" id="cd02120">
    <property type="entry name" value="PA_subtilisin_like"/>
    <property type="match status" value="1"/>
</dbReference>
<dbReference type="CDD" id="cd04852">
    <property type="entry name" value="Peptidases_S8_3"/>
    <property type="match status" value="1"/>
</dbReference>
<dbReference type="FunFam" id="2.60.40.2310:FF:000001">
    <property type="entry name" value="Subtilisin-like protease SBT1.5"/>
    <property type="match status" value="1"/>
</dbReference>
<dbReference type="FunFam" id="3.40.50.200:FF:000006">
    <property type="entry name" value="Subtilisin-like protease SBT1.5"/>
    <property type="match status" value="1"/>
</dbReference>
<dbReference type="FunFam" id="3.50.30.30:FF:000005">
    <property type="entry name" value="subtilisin-like protease SBT1.5"/>
    <property type="match status" value="1"/>
</dbReference>
<dbReference type="FunFam" id="3.30.70.80:FF:000002">
    <property type="entry name" value="Subtilisin-like protease SBT5.3"/>
    <property type="match status" value="1"/>
</dbReference>
<dbReference type="Gene3D" id="2.60.40.2310">
    <property type="match status" value="1"/>
</dbReference>
<dbReference type="Gene3D" id="3.50.30.30">
    <property type="match status" value="1"/>
</dbReference>
<dbReference type="Gene3D" id="3.30.70.80">
    <property type="entry name" value="Peptidase S8 propeptide/proteinase inhibitor I9"/>
    <property type="match status" value="1"/>
</dbReference>
<dbReference type="Gene3D" id="3.40.50.200">
    <property type="entry name" value="Peptidase S8/S53 domain"/>
    <property type="match status" value="1"/>
</dbReference>
<dbReference type="InterPro" id="IPR003137">
    <property type="entry name" value="PA_domain"/>
</dbReference>
<dbReference type="InterPro" id="IPR000209">
    <property type="entry name" value="Peptidase_S8/S53_dom"/>
</dbReference>
<dbReference type="InterPro" id="IPR036852">
    <property type="entry name" value="Peptidase_S8/S53_dom_sf"/>
</dbReference>
<dbReference type="InterPro" id="IPR022398">
    <property type="entry name" value="Peptidase_S8_His-AS"/>
</dbReference>
<dbReference type="InterPro" id="IPR023828">
    <property type="entry name" value="Peptidase_S8_Ser-AS"/>
</dbReference>
<dbReference type="InterPro" id="IPR015500">
    <property type="entry name" value="Peptidase_S8_subtilisin-rel"/>
</dbReference>
<dbReference type="InterPro" id="IPR034197">
    <property type="entry name" value="Peptidases_S8_3"/>
</dbReference>
<dbReference type="InterPro" id="IPR010259">
    <property type="entry name" value="S8pro/Inhibitor_I9"/>
</dbReference>
<dbReference type="InterPro" id="IPR037045">
    <property type="entry name" value="S8pro/Inhibitor_I9_sf"/>
</dbReference>
<dbReference type="InterPro" id="IPR045051">
    <property type="entry name" value="SBT"/>
</dbReference>
<dbReference type="InterPro" id="IPR041469">
    <property type="entry name" value="Subtilisin-like_FN3"/>
</dbReference>
<dbReference type="PANTHER" id="PTHR10795">
    <property type="entry name" value="PROPROTEIN CONVERTASE SUBTILISIN/KEXIN"/>
    <property type="match status" value="1"/>
</dbReference>
<dbReference type="Pfam" id="PF17766">
    <property type="entry name" value="fn3_6"/>
    <property type="match status" value="1"/>
</dbReference>
<dbReference type="Pfam" id="PF05922">
    <property type="entry name" value="Inhibitor_I9"/>
    <property type="match status" value="1"/>
</dbReference>
<dbReference type="Pfam" id="PF02225">
    <property type="entry name" value="PA"/>
    <property type="match status" value="1"/>
</dbReference>
<dbReference type="Pfam" id="PF00082">
    <property type="entry name" value="Peptidase_S8"/>
    <property type="match status" value="1"/>
</dbReference>
<dbReference type="PRINTS" id="PR00723">
    <property type="entry name" value="SUBTILISIN"/>
</dbReference>
<dbReference type="SUPFAM" id="SSF52743">
    <property type="entry name" value="Subtilisin-like"/>
    <property type="match status" value="1"/>
</dbReference>
<dbReference type="PROSITE" id="PS51892">
    <property type="entry name" value="SUBTILASE"/>
    <property type="match status" value="1"/>
</dbReference>
<dbReference type="PROSITE" id="PS00137">
    <property type="entry name" value="SUBTILASE_HIS"/>
    <property type="match status" value="1"/>
</dbReference>
<dbReference type="PROSITE" id="PS00138">
    <property type="entry name" value="SUBTILASE_SER"/>
    <property type="match status" value="1"/>
</dbReference>
<name>SBT34_ARATH</name>
<accession>F4HPF1</accession>
<accession>Q9MAP6</accession>
<evidence type="ECO:0000250" key="1">
    <source>
        <dbReference type="UniProtKB" id="Q39547"/>
    </source>
</evidence>
<evidence type="ECO:0000250" key="2">
    <source>
        <dbReference type="UniProtKB" id="Q84WS0"/>
    </source>
</evidence>
<evidence type="ECO:0000255" key="3"/>
<evidence type="ECO:0000255" key="4">
    <source>
        <dbReference type="PROSITE-ProRule" id="PRU00498"/>
    </source>
</evidence>
<evidence type="ECO:0000255" key="5">
    <source>
        <dbReference type="PROSITE-ProRule" id="PRU01240"/>
    </source>
</evidence>
<evidence type="ECO:0000255" key="6">
    <source>
        <dbReference type="PROSITE-ProRule" id="PRU10082"/>
    </source>
</evidence>
<evidence type="ECO:0000303" key="7">
    <source>
    </source>
</evidence>
<evidence type="ECO:0000305" key="8"/>
<evidence type="ECO:0000312" key="9">
    <source>
        <dbReference type="Araport" id="AT1G32950"/>
    </source>
</evidence>
<evidence type="ECO:0000312" key="10">
    <source>
        <dbReference type="EMBL" id="AAF31277.1"/>
    </source>
</evidence>
<evidence type="ECO:0000312" key="11">
    <source>
        <dbReference type="Proteomes" id="UP000006548"/>
    </source>
</evidence>
<organism evidence="11">
    <name type="scientific">Arabidopsis thaliana</name>
    <name type="common">Mouse-ear cress</name>
    <dbReference type="NCBI Taxonomy" id="3702"/>
    <lineage>
        <taxon>Eukaryota</taxon>
        <taxon>Viridiplantae</taxon>
        <taxon>Streptophyta</taxon>
        <taxon>Embryophyta</taxon>
        <taxon>Tracheophyta</taxon>
        <taxon>Spermatophyta</taxon>
        <taxon>Magnoliopsida</taxon>
        <taxon>eudicotyledons</taxon>
        <taxon>Gunneridae</taxon>
        <taxon>Pentapetalae</taxon>
        <taxon>rosids</taxon>
        <taxon>malvids</taxon>
        <taxon>Brassicales</taxon>
        <taxon>Brassicaceae</taxon>
        <taxon>Camelineae</taxon>
        <taxon>Arabidopsis</taxon>
    </lineage>
</organism>
<gene>
    <name evidence="7" type="primary">SBT3.4</name>
    <name evidence="9" type="ordered locus">At1g32950</name>
    <name evidence="10" type="ORF">F9L11.12</name>
</gene>
<feature type="signal peptide" evidence="3">
    <location>
        <begin position="1"/>
        <end position="23"/>
    </location>
</feature>
<feature type="propeptide" id="PRO_0000435193" description="Activation peptide" evidence="1">
    <location>
        <begin position="24"/>
        <end position="108"/>
    </location>
</feature>
<feature type="chain" id="PRO_5003309464" description="Subtilisin-like protease SBT3.4">
    <location>
        <begin position="109"/>
        <end status="unknown"/>
    </location>
</feature>
<feature type="propeptide" id="PRO_0000435194" evidence="1">
    <location>
        <begin status="unknown"/>
        <end position="773"/>
    </location>
</feature>
<feature type="domain" description="Inhibitor I9" evidence="3">
    <location>
        <begin position="29"/>
        <end position="108"/>
    </location>
</feature>
<feature type="domain" description="Peptidase S8" evidence="5">
    <location>
        <begin position="112"/>
        <end position="620"/>
    </location>
</feature>
<feature type="domain" description="PA" evidence="3">
    <location>
        <begin position="382"/>
        <end position="474"/>
    </location>
</feature>
<feature type="active site" description="Charge relay system" evidence="5">
    <location>
        <position position="142"/>
    </location>
</feature>
<feature type="active site" description="Charge relay system" evidence="5">
    <location>
        <position position="216"/>
    </location>
</feature>
<feature type="active site" description="Charge relay system" evidence="5">
    <location>
        <position position="551"/>
    </location>
</feature>
<feature type="glycosylation site" description="N-linked (GlcNAc...) asparagine" evidence="4">
    <location>
        <position position="200"/>
    </location>
</feature>
<feature type="glycosylation site" description="N-linked (GlcNAc...) asparagine" evidence="4">
    <location>
        <position position="231"/>
    </location>
</feature>
<feature type="glycosylation site" description="N-linked (GlcNAc...) asparagine" evidence="4">
    <location>
        <position position="408"/>
    </location>
</feature>
<feature type="glycosylation site" description="N-linked (GlcNAc...) asparagine" evidence="4">
    <location>
        <position position="536"/>
    </location>
</feature>
<feature type="glycosylation site" description="N-linked (GlcNAc...) asparagine" evidence="4">
    <location>
        <position position="643"/>
    </location>
</feature>
<comment type="subcellular location">
    <subcellularLocation>
        <location evidence="2">Secreted</location>
    </subcellularLocation>
</comment>
<comment type="similarity">
    <text evidence="8">Belongs to the peptidase S8 family.</text>
</comment>
<comment type="sequence caution" evidence="8">
    <conflict type="erroneous gene model prediction">
        <sequence resource="EMBL-CDS" id="AAF31277"/>
    </conflict>
</comment>
<reference key="1">
    <citation type="journal article" date="2000" name="Nature">
        <title>Sequence and analysis of chromosome 1 of the plant Arabidopsis thaliana.</title>
        <authorList>
            <person name="Theologis A."/>
            <person name="Ecker J.R."/>
            <person name="Palm C.J."/>
            <person name="Federspiel N.A."/>
            <person name="Kaul S."/>
            <person name="White O."/>
            <person name="Alonso J."/>
            <person name="Altafi H."/>
            <person name="Araujo R."/>
            <person name="Bowman C.L."/>
            <person name="Brooks S.Y."/>
            <person name="Buehler E."/>
            <person name="Chan A."/>
            <person name="Chao Q."/>
            <person name="Chen H."/>
            <person name="Cheuk R.F."/>
            <person name="Chin C.W."/>
            <person name="Chung M.K."/>
            <person name="Conn L."/>
            <person name="Conway A.B."/>
            <person name="Conway A.R."/>
            <person name="Creasy T.H."/>
            <person name="Dewar K."/>
            <person name="Dunn P."/>
            <person name="Etgu P."/>
            <person name="Feldblyum T.V."/>
            <person name="Feng J.-D."/>
            <person name="Fong B."/>
            <person name="Fujii C.Y."/>
            <person name="Gill J.E."/>
            <person name="Goldsmith A.D."/>
            <person name="Haas B."/>
            <person name="Hansen N.F."/>
            <person name="Hughes B."/>
            <person name="Huizar L."/>
            <person name="Hunter J.L."/>
            <person name="Jenkins J."/>
            <person name="Johnson-Hopson C."/>
            <person name="Khan S."/>
            <person name="Khaykin E."/>
            <person name="Kim C.J."/>
            <person name="Koo H.L."/>
            <person name="Kremenetskaia I."/>
            <person name="Kurtz D.B."/>
            <person name="Kwan A."/>
            <person name="Lam B."/>
            <person name="Langin-Hooper S."/>
            <person name="Lee A."/>
            <person name="Lee J.M."/>
            <person name="Lenz C.A."/>
            <person name="Li J.H."/>
            <person name="Li Y.-P."/>
            <person name="Lin X."/>
            <person name="Liu S.X."/>
            <person name="Liu Z.A."/>
            <person name="Luros J.S."/>
            <person name="Maiti R."/>
            <person name="Marziali A."/>
            <person name="Militscher J."/>
            <person name="Miranda M."/>
            <person name="Nguyen M."/>
            <person name="Nierman W.C."/>
            <person name="Osborne B.I."/>
            <person name="Pai G."/>
            <person name="Peterson J."/>
            <person name="Pham P.K."/>
            <person name="Rizzo M."/>
            <person name="Rooney T."/>
            <person name="Rowley D."/>
            <person name="Sakano H."/>
            <person name="Salzberg S.L."/>
            <person name="Schwartz J.R."/>
            <person name="Shinn P."/>
            <person name="Southwick A.M."/>
            <person name="Sun H."/>
            <person name="Tallon L.J."/>
            <person name="Tambunga G."/>
            <person name="Toriumi M.J."/>
            <person name="Town C.D."/>
            <person name="Utterback T."/>
            <person name="Van Aken S."/>
            <person name="Vaysberg M."/>
            <person name="Vysotskaia V.S."/>
            <person name="Walker M."/>
            <person name="Wu D."/>
            <person name="Yu G."/>
            <person name="Fraser C.M."/>
            <person name="Venter J.C."/>
            <person name="Davis R.W."/>
        </authorList>
    </citation>
    <scope>NUCLEOTIDE SEQUENCE [LARGE SCALE GENOMIC DNA]</scope>
    <source>
        <strain>cv. Columbia</strain>
    </source>
</reference>
<reference key="2">
    <citation type="journal article" date="2017" name="Plant J.">
        <title>Araport11: a complete reannotation of the Arabidopsis thaliana reference genome.</title>
        <authorList>
            <person name="Cheng C.Y."/>
            <person name="Krishnakumar V."/>
            <person name="Chan A.P."/>
            <person name="Thibaud-Nissen F."/>
            <person name="Schobel S."/>
            <person name="Town C.D."/>
        </authorList>
    </citation>
    <scope>GENOME REANNOTATION</scope>
    <source>
        <strain>cv. Columbia</strain>
    </source>
</reference>
<reference key="3">
    <citation type="journal article" date="2005" name="PLoS Comput. Biol.">
        <title>Inferring hypotheses on functional relationships of genes: Analysis of the Arabidopsis thaliana subtilase gene family.</title>
        <authorList>
            <person name="Rautengarten C."/>
            <person name="Steinhauser D."/>
            <person name="Bussis D."/>
            <person name="Stintzi A."/>
            <person name="Schaller A."/>
            <person name="Kopka J."/>
            <person name="Altmann T."/>
        </authorList>
    </citation>
    <scope>GENE FAMILY</scope>
    <scope>NOMENCLATURE</scope>
</reference>
<keyword id="KW-0068">Autocatalytic cleavage</keyword>
<keyword id="KW-0325">Glycoprotein</keyword>
<keyword id="KW-0378">Hydrolase</keyword>
<keyword id="KW-0645">Protease</keyword>
<keyword id="KW-1185">Reference proteome</keyword>
<keyword id="KW-0964">Secreted</keyword>
<keyword id="KW-0720">Serine protease</keyword>
<keyword id="KW-0732">Signal</keyword>
<keyword id="KW-0865">Zymogen</keyword>
<proteinExistence type="inferred from homology"/>